<organism>
    <name type="scientific">Schizosaccharomyces pombe (strain 972 / ATCC 24843)</name>
    <name type="common">Fission yeast</name>
    <dbReference type="NCBI Taxonomy" id="284812"/>
    <lineage>
        <taxon>Eukaryota</taxon>
        <taxon>Fungi</taxon>
        <taxon>Dikarya</taxon>
        <taxon>Ascomycota</taxon>
        <taxon>Taphrinomycotina</taxon>
        <taxon>Schizosaccharomycetes</taxon>
        <taxon>Schizosaccharomycetales</taxon>
        <taxon>Schizosaccharomycetaceae</taxon>
        <taxon>Schizosaccharomyces</taxon>
    </lineage>
</organism>
<sequence>MSTAEQLFGAEEEEKYVDQDLSEDEEDERFLKAIRSSRSTKPVVDVLKVKSESSADELEERDAHLDRFRRDSTFESETSDHEDFSGGSENELDEETTKNANSIKKISLEEVEKQRKAIKRSGVIYLSRIPPYMAPNKLRQILSQYGKIGRVYLTPESSAKRAQRLRNGGNKRVMYEEGWIEFESKRVAKSVAELLNTNQIGGKKSSWYHDDIWNMKYLPKFKWHHLTEQIAAENAARESRLKVEIEQGRKQLKQYMRNVENAKMIEGIRKKRSERDTLNVSTEFPEETKDLSEDTKPSKQARRFFGQKSIVSNRNMPTDNAKQQKVENVLRRVF</sequence>
<accession>O74362</accession>
<accession>Q7LKZ9</accession>
<reference key="1">
    <citation type="journal article" date="2002" name="Nature">
        <title>The genome sequence of Schizosaccharomyces pombe.</title>
        <authorList>
            <person name="Wood V."/>
            <person name="Gwilliam R."/>
            <person name="Rajandream M.A."/>
            <person name="Lyne M.H."/>
            <person name="Lyne R."/>
            <person name="Stewart A."/>
            <person name="Sgouros J.G."/>
            <person name="Peat N."/>
            <person name="Hayles J."/>
            <person name="Baker S.G."/>
            <person name="Basham D."/>
            <person name="Bowman S."/>
            <person name="Brooks K."/>
            <person name="Brown D."/>
            <person name="Brown S."/>
            <person name="Chillingworth T."/>
            <person name="Churcher C.M."/>
            <person name="Collins M."/>
            <person name="Connor R."/>
            <person name="Cronin A."/>
            <person name="Davis P."/>
            <person name="Feltwell T."/>
            <person name="Fraser A."/>
            <person name="Gentles S."/>
            <person name="Goble A."/>
            <person name="Hamlin N."/>
            <person name="Harris D.E."/>
            <person name="Hidalgo J."/>
            <person name="Hodgson G."/>
            <person name="Holroyd S."/>
            <person name="Hornsby T."/>
            <person name="Howarth S."/>
            <person name="Huckle E.J."/>
            <person name="Hunt S."/>
            <person name="Jagels K."/>
            <person name="James K.D."/>
            <person name="Jones L."/>
            <person name="Jones M."/>
            <person name="Leather S."/>
            <person name="McDonald S."/>
            <person name="McLean J."/>
            <person name="Mooney P."/>
            <person name="Moule S."/>
            <person name="Mungall K.L."/>
            <person name="Murphy L.D."/>
            <person name="Niblett D."/>
            <person name="Odell C."/>
            <person name="Oliver K."/>
            <person name="O'Neil S."/>
            <person name="Pearson D."/>
            <person name="Quail M.A."/>
            <person name="Rabbinowitsch E."/>
            <person name="Rutherford K.M."/>
            <person name="Rutter S."/>
            <person name="Saunders D."/>
            <person name="Seeger K."/>
            <person name="Sharp S."/>
            <person name="Skelton J."/>
            <person name="Simmonds M.N."/>
            <person name="Squares R."/>
            <person name="Squares S."/>
            <person name="Stevens K."/>
            <person name="Taylor K."/>
            <person name="Taylor R.G."/>
            <person name="Tivey A."/>
            <person name="Walsh S.V."/>
            <person name="Warren T."/>
            <person name="Whitehead S."/>
            <person name="Woodward J.R."/>
            <person name="Volckaert G."/>
            <person name="Aert R."/>
            <person name="Robben J."/>
            <person name="Grymonprez B."/>
            <person name="Weltjens I."/>
            <person name="Vanstreels E."/>
            <person name="Rieger M."/>
            <person name="Schaefer M."/>
            <person name="Mueller-Auer S."/>
            <person name="Gabel C."/>
            <person name="Fuchs M."/>
            <person name="Duesterhoeft A."/>
            <person name="Fritzc C."/>
            <person name="Holzer E."/>
            <person name="Moestl D."/>
            <person name="Hilbert H."/>
            <person name="Borzym K."/>
            <person name="Langer I."/>
            <person name="Beck A."/>
            <person name="Lehrach H."/>
            <person name="Reinhardt R."/>
            <person name="Pohl T.M."/>
            <person name="Eger P."/>
            <person name="Zimmermann W."/>
            <person name="Wedler H."/>
            <person name="Wambutt R."/>
            <person name="Purnelle B."/>
            <person name="Goffeau A."/>
            <person name="Cadieu E."/>
            <person name="Dreano S."/>
            <person name="Gloux S."/>
            <person name="Lelaure V."/>
            <person name="Mottier S."/>
            <person name="Galibert F."/>
            <person name="Aves S.J."/>
            <person name="Xiang Z."/>
            <person name="Hunt C."/>
            <person name="Moore K."/>
            <person name="Hurst S.M."/>
            <person name="Lucas M."/>
            <person name="Rochet M."/>
            <person name="Gaillardin C."/>
            <person name="Tallada V.A."/>
            <person name="Garzon A."/>
            <person name="Thode G."/>
            <person name="Daga R.R."/>
            <person name="Cruzado L."/>
            <person name="Jimenez J."/>
            <person name="Sanchez M."/>
            <person name="del Rey F."/>
            <person name="Benito J."/>
            <person name="Dominguez A."/>
            <person name="Revuelta J.L."/>
            <person name="Moreno S."/>
            <person name="Armstrong J."/>
            <person name="Forsburg S.L."/>
            <person name="Cerutti L."/>
            <person name="Lowe T."/>
            <person name="McCombie W.R."/>
            <person name="Paulsen I."/>
            <person name="Potashkin J."/>
            <person name="Shpakovski G.V."/>
            <person name="Ussery D."/>
            <person name="Barrell B.G."/>
            <person name="Nurse P."/>
        </authorList>
    </citation>
    <scope>NUCLEOTIDE SEQUENCE [LARGE SCALE GENOMIC DNA]</scope>
    <source>
        <strain>972 / ATCC 24843</strain>
    </source>
</reference>
<reference key="2">
    <citation type="journal article" date="2006" name="Nat. Biotechnol.">
        <title>ORFeome cloning and global analysis of protein localization in the fission yeast Schizosaccharomyces pombe.</title>
        <authorList>
            <person name="Matsuyama A."/>
            <person name="Arai R."/>
            <person name="Yashiroda Y."/>
            <person name="Shirai A."/>
            <person name="Kamata A."/>
            <person name="Sekido S."/>
            <person name="Kobayashi Y."/>
            <person name="Hashimoto A."/>
            <person name="Hamamoto M."/>
            <person name="Hiraoka Y."/>
            <person name="Horinouchi S."/>
            <person name="Yoshida M."/>
        </authorList>
    </citation>
    <scope>SUBCELLULAR LOCATION [LARGE SCALE ANALYSIS]</scope>
</reference>
<reference key="3">
    <citation type="journal article" date="2008" name="J. Proteome Res.">
        <title>Phosphoproteome analysis of fission yeast.</title>
        <authorList>
            <person name="Wilson-Grady J.T."/>
            <person name="Villen J."/>
            <person name="Gygi S.P."/>
        </authorList>
    </citation>
    <scope>PHOSPHORYLATION [LARGE SCALE ANALYSIS] AT SER-22; SER-51; SER-53; SER-54; SER-85 AND SER-88</scope>
    <scope>IDENTIFICATION BY MASS SPECTROMETRY</scope>
</reference>
<dbReference type="EMBL" id="CU329671">
    <property type="protein sequence ID" value="CAA20652.1"/>
    <property type="molecule type" value="Genomic_DNA"/>
</dbReference>
<dbReference type="PIR" id="T40042">
    <property type="entry name" value="T40042"/>
</dbReference>
<dbReference type="RefSeq" id="NP_595758.1">
    <property type="nucleotide sequence ID" value="NM_001021658.2"/>
</dbReference>
<dbReference type="SMR" id="O74362"/>
<dbReference type="FunCoup" id="O74362">
    <property type="interactions" value="592"/>
</dbReference>
<dbReference type="STRING" id="284812.O74362"/>
<dbReference type="iPTMnet" id="O74362"/>
<dbReference type="PaxDb" id="4896-SPBC28E12.05.1"/>
<dbReference type="EnsemblFungi" id="SPBC28E12.05.1">
    <property type="protein sequence ID" value="SPBC28E12.05.1:pep"/>
    <property type="gene ID" value="SPBC28E12.05"/>
</dbReference>
<dbReference type="GeneID" id="2540503"/>
<dbReference type="KEGG" id="spo:2540503"/>
<dbReference type="PomBase" id="SPBC28E12.05">
    <property type="gene designation" value="esf2"/>
</dbReference>
<dbReference type="VEuPathDB" id="FungiDB:SPBC28E12.05"/>
<dbReference type="eggNOG" id="KOG3152">
    <property type="taxonomic scope" value="Eukaryota"/>
</dbReference>
<dbReference type="HOGENOM" id="CLU_054086_0_1_1"/>
<dbReference type="InParanoid" id="O74362"/>
<dbReference type="OMA" id="HMLSEQM"/>
<dbReference type="PhylomeDB" id="O74362"/>
<dbReference type="PRO" id="PR:O74362"/>
<dbReference type="Proteomes" id="UP000002485">
    <property type="component" value="Chromosome II"/>
</dbReference>
<dbReference type="GO" id="GO:0005730">
    <property type="term" value="C:nucleolus"/>
    <property type="evidence" value="ECO:0007005"/>
    <property type="project" value="PomBase"/>
</dbReference>
<dbReference type="GO" id="GO:0005634">
    <property type="term" value="C:nucleus"/>
    <property type="evidence" value="ECO:0007005"/>
    <property type="project" value="PomBase"/>
</dbReference>
<dbReference type="GO" id="GO:0003723">
    <property type="term" value="F:RNA binding"/>
    <property type="evidence" value="ECO:0000318"/>
    <property type="project" value="GO_Central"/>
</dbReference>
<dbReference type="GO" id="GO:0000480">
    <property type="term" value="P:endonucleolytic cleavage in 5'-ETS of tricistronic rRNA transcript (SSU-rRNA, 5.8S rRNA, LSU-rRNA)"/>
    <property type="evidence" value="ECO:0000318"/>
    <property type="project" value="GO_Central"/>
</dbReference>
<dbReference type="GO" id="GO:0000447">
    <property type="term" value="P:endonucleolytic cleavage in ITS1 to separate SSU-rRNA from 5.8S rRNA and LSU-rRNA from tricistronic rRNA transcript (SSU-rRNA, 5.8S rRNA, LSU-rRNA)"/>
    <property type="evidence" value="ECO:0000318"/>
    <property type="project" value="GO_Central"/>
</dbReference>
<dbReference type="GO" id="GO:0000472">
    <property type="term" value="P:endonucleolytic cleavage to generate mature 5'-end of SSU-rRNA from (SSU-rRNA, 5.8S rRNA, LSU-rRNA)"/>
    <property type="evidence" value="ECO:0000318"/>
    <property type="project" value="GO_Central"/>
</dbReference>
<dbReference type="GO" id="GO:0034462">
    <property type="term" value="P:small-subunit processome assembly"/>
    <property type="evidence" value="ECO:0000318"/>
    <property type="project" value="GO_Central"/>
</dbReference>
<dbReference type="CDD" id="cd12263">
    <property type="entry name" value="RRM_ABT1_like"/>
    <property type="match status" value="1"/>
</dbReference>
<dbReference type="Gene3D" id="3.30.70.330">
    <property type="match status" value="1"/>
</dbReference>
<dbReference type="InterPro" id="IPR039119">
    <property type="entry name" value="ABT1/Esf2"/>
</dbReference>
<dbReference type="InterPro" id="IPR034353">
    <property type="entry name" value="ABT1/ESF2_RRM"/>
</dbReference>
<dbReference type="InterPro" id="IPR012677">
    <property type="entry name" value="Nucleotide-bd_a/b_plait_sf"/>
</dbReference>
<dbReference type="InterPro" id="IPR035979">
    <property type="entry name" value="RBD_domain_sf"/>
</dbReference>
<dbReference type="InterPro" id="IPR000504">
    <property type="entry name" value="RRM_dom"/>
</dbReference>
<dbReference type="PANTHER" id="PTHR12311">
    <property type="entry name" value="ACTIVATOR OF BASAL TRANSCRIPTION 1"/>
    <property type="match status" value="1"/>
</dbReference>
<dbReference type="PANTHER" id="PTHR12311:SF7">
    <property type="entry name" value="ACTIVATOR OF BASAL TRANSCRIPTION 1"/>
    <property type="match status" value="1"/>
</dbReference>
<dbReference type="SUPFAM" id="SSF54928">
    <property type="entry name" value="RNA-binding domain, RBD"/>
    <property type="match status" value="1"/>
</dbReference>
<dbReference type="PROSITE" id="PS50102">
    <property type="entry name" value="RRM"/>
    <property type="match status" value="1"/>
</dbReference>
<feature type="chain" id="PRO_0000285379" description="Pre-rRNA-processing protein esf2">
    <location>
        <begin position="1"/>
        <end position="334"/>
    </location>
</feature>
<feature type="domain" description="RRM" evidence="2">
    <location>
        <begin position="122"/>
        <end position="212"/>
    </location>
</feature>
<feature type="region of interest" description="Disordered" evidence="3">
    <location>
        <begin position="1"/>
        <end position="25"/>
    </location>
</feature>
<feature type="region of interest" description="Disordered" evidence="3">
    <location>
        <begin position="52"/>
        <end position="98"/>
    </location>
</feature>
<feature type="region of interest" description="Disordered" evidence="3">
    <location>
        <begin position="275"/>
        <end position="299"/>
    </location>
</feature>
<feature type="compositionally biased region" description="Acidic residues" evidence="3">
    <location>
        <begin position="10"/>
        <end position="25"/>
    </location>
</feature>
<feature type="compositionally biased region" description="Basic and acidic residues" evidence="3">
    <location>
        <begin position="61"/>
        <end position="84"/>
    </location>
</feature>
<feature type="compositionally biased region" description="Basic and acidic residues" evidence="3">
    <location>
        <begin position="286"/>
        <end position="297"/>
    </location>
</feature>
<feature type="modified residue" description="Phosphoserine" evidence="5">
    <location>
        <position position="22"/>
    </location>
</feature>
<feature type="modified residue" description="Phosphoserine" evidence="5">
    <location>
        <position position="51"/>
    </location>
</feature>
<feature type="modified residue" description="Phosphoserine" evidence="5">
    <location>
        <position position="53"/>
    </location>
</feature>
<feature type="modified residue" description="Phosphoserine" evidence="5">
    <location>
        <position position="54"/>
    </location>
</feature>
<feature type="modified residue" description="Phosphoserine" evidence="5">
    <location>
        <position position="85"/>
    </location>
</feature>
<feature type="modified residue" description="Phosphoserine" evidence="5">
    <location>
        <position position="88"/>
    </location>
</feature>
<proteinExistence type="evidence at protein level"/>
<keyword id="KW-0539">Nucleus</keyword>
<keyword id="KW-0597">Phosphoprotein</keyword>
<keyword id="KW-1185">Reference proteome</keyword>
<keyword id="KW-0690">Ribosome biogenesis</keyword>
<keyword id="KW-0694">RNA-binding</keyword>
<keyword id="KW-0698">rRNA processing</keyword>
<protein>
    <recommendedName>
        <fullName>Pre-rRNA-processing protein esf2</fullName>
    </recommendedName>
    <alternativeName>
        <fullName>18S rRNA factor 2</fullName>
    </alternativeName>
</protein>
<comment type="function">
    <text evidence="1">Involved in the small subunit (SSU) processome assembly and function, and in the 18S rRNA synthesis. Required for the early cleavages at sites A0, A1 and A2 (By similarity).</text>
</comment>
<comment type="subcellular location">
    <subcellularLocation>
        <location evidence="4">Nucleus</location>
        <location evidence="4">Nucleolus</location>
    </subcellularLocation>
</comment>
<comment type="similarity">
    <text evidence="6">Belongs to the ESF2/ABP1 family.</text>
</comment>
<evidence type="ECO:0000250" key="1"/>
<evidence type="ECO:0000255" key="2">
    <source>
        <dbReference type="PROSITE-ProRule" id="PRU00176"/>
    </source>
</evidence>
<evidence type="ECO:0000256" key="3">
    <source>
        <dbReference type="SAM" id="MobiDB-lite"/>
    </source>
</evidence>
<evidence type="ECO:0000269" key="4">
    <source>
    </source>
</evidence>
<evidence type="ECO:0000269" key="5">
    <source>
    </source>
</evidence>
<evidence type="ECO:0000305" key="6"/>
<gene>
    <name type="primary">esf2</name>
    <name type="ORF">SPBC28E12.05</name>
    <name type="ORF">SPBC3H7.17c</name>
</gene>
<name>ESF2_SCHPO</name>